<evidence type="ECO:0000255" key="1">
    <source>
        <dbReference type="HAMAP-Rule" id="MF_01663"/>
    </source>
</evidence>
<name>RHAM_ENTFA</name>
<proteinExistence type="inferred from homology"/>
<accession>Q838L0</accession>
<feature type="chain" id="PRO_0000344567" description="L-rhamnose mutarotase">
    <location>
        <begin position="1"/>
        <end position="103"/>
    </location>
</feature>
<feature type="active site" description="Proton donor" evidence="1">
    <location>
        <position position="22"/>
    </location>
</feature>
<feature type="binding site" evidence="1">
    <location>
        <position position="18"/>
    </location>
    <ligand>
        <name>substrate</name>
    </ligand>
</feature>
<feature type="binding site" evidence="1">
    <location>
        <position position="41"/>
    </location>
    <ligand>
        <name>substrate</name>
    </ligand>
</feature>
<feature type="binding site" evidence="1">
    <location>
        <begin position="76"/>
        <end position="77"/>
    </location>
    <ligand>
        <name>substrate</name>
    </ligand>
</feature>
<comment type="function">
    <text evidence="1">Involved in the anomeric conversion of L-rhamnose.</text>
</comment>
<comment type="catalytic activity">
    <reaction evidence="1">
        <text>alpha-L-rhamnose = beta-L-rhamnose</text>
        <dbReference type="Rhea" id="RHEA:25584"/>
        <dbReference type="ChEBI" id="CHEBI:27586"/>
        <dbReference type="ChEBI" id="CHEBI:27907"/>
        <dbReference type="EC" id="5.1.3.32"/>
    </reaction>
</comment>
<comment type="pathway">
    <text evidence="1">Carbohydrate metabolism; L-rhamnose metabolism.</text>
</comment>
<comment type="subunit">
    <text evidence="1">Homodimer.</text>
</comment>
<comment type="subcellular location">
    <subcellularLocation>
        <location evidence="1">Cytoplasm</location>
    </subcellularLocation>
</comment>
<comment type="similarity">
    <text evidence="1">Belongs to the rhamnose mutarotase family.</text>
</comment>
<gene>
    <name evidence="1" type="primary">rhaM</name>
    <name type="ordered locus">EF_0436</name>
</gene>
<dbReference type="EC" id="5.1.3.32" evidence="1"/>
<dbReference type="EMBL" id="AE016830">
    <property type="protein sequence ID" value="AAO80292.1"/>
    <property type="molecule type" value="Genomic_DNA"/>
</dbReference>
<dbReference type="RefSeq" id="NP_814221.1">
    <property type="nucleotide sequence ID" value="NC_004668.1"/>
</dbReference>
<dbReference type="RefSeq" id="WP_002379067.1">
    <property type="nucleotide sequence ID" value="NZ_KE136524.1"/>
</dbReference>
<dbReference type="SMR" id="Q838L0"/>
<dbReference type="STRING" id="226185.EF_0436"/>
<dbReference type="EnsemblBacteria" id="AAO80292">
    <property type="protein sequence ID" value="AAO80292"/>
    <property type="gene ID" value="EF_0436"/>
</dbReference>
<dbReference type="KEGG" id="efa:EF0436"/>
<dbReference type="PATRIC" id="fig|226185.45.peg.2897"/>
<dbReference type="eggNOG" id="COG3254">
    <property type="taxonomic scope" value="Bacteria"/>
</dbReference>
<dbReference type="HOGENOM" id="CLU_100689_2_0_9"/>
<dbReference type="UniPathway" id="UPA00125"/>
<dbReference type="Proteomes" id="UP000001415">
    <property type="component" value="Chromosome"/>
</dbReference>
<dbReference type="GO" id="GO:0005737">
    <property type="term" value="C:cytoplasm"/>
    <property type="evidence" value="ECO:0007669"/>
    <property type="project" value="UniProtKB-SubCell"/>
</dbReference>
<dbReference type="GO" id="GO:0062192">
    <property type="term" value="F:L-rhamnose mutarotase activity"/>
    <property type="evidence" value="ECO:0007669"/>
    <property type="project" value="UniProtKB-EC"/>
</dbReference>
<dbReference type="GO" id="GO:0019301">
    <property type="term" value="P:rhamnose catabolic process"/>
    <property type="evidence" value="ECO:0007669"/>
    <property type="project" value="TreeGrafter"/>
</dbReference>
<dbReference type="Gene3D" id="3.30.70.100">
    <property type="match status" value="1"/>
</dbReference>
<dbReference type="HAMAP" id="MF_01663">
    <property type="entry name" value="L_rham_rotase"/>
    <property type="match status" value="1"/>
</dbReference>
<dbReference type="InterPro" id="IPR011008">
    <property type="entry name" value="Dimeric_a/b-barrel"/>
</dbReference>
<dbReference type="InterPro" id="IPR013448">
    <property type="entry name" value="L-rhamnose_mutarotase"/>
</dbReference>
<dbReference type="InterPro" id="IPR008000">
    <property type="entry name" value="Rham/fucose_mutarotase"/>
</dbReference>
<dbReference type="NCBIfam" id="TIGR02625">
    <property type="entry name" value="YiiL_rotase"/>
    <property type="match status" value="1"/>
</dbReference>
<dbReference type="PANTHER" id="PTHR34389">
    <property type="entry name" value="L-RHAMNOSE MUTAROTASE"/>
    <property type="match status" value="1"/>
</dbReference>
<dbReference type="PANTHER" id="PTHR34389:SF2">
    <property type="entry name" value="L-RHAMNOSE MUTAROTASE"/>
    <property type="match status" value="1"/>
</dbReference>
<dbReference type="Pfam" id="PF05336">
    <property type="entry name" value="rhaM"/>
    <property type="match status" value="1"/>
</dbReference>
<dbReference type="SUPFAM" id="SSF54909">
    <property type="entry name" value="Dimeric alpha+beta barrel"/>
    <property type="match status" value="1"/>
</dbReference>
<organism>
    <name type="scientific">Enterococcus faecalis (strain ATCC 700802 / V583)</name>
    <dbReference type="NCBI Taxonomy" id="226185"/>
    <lineage>
        <taxon>Bacteria</taxon>
        <taxon>Bacillati</taxon>
        <taxon>Bacillota</taxon>
        <taxon>Bacilli</taxon>
        <taxon>Lactobacillales</taxon>
        <taxon>Enterococcaceae</taxon>
        <taxon>Enterococcus</taxon>
    </lineage>
</organism>
<keyword id="KW-0119">Carbohydrate metabolism</keyword>
<keyword id="KW-0963">Cytoplasm</keyword>
<keyword id="KW-0413">Isomerase</keyword>
<keyword id="KW-1185">Reference proteome</keyword>
<keyword id="KW-0684">Rhamnose metabolism</keyword>
<reference key="1">
    <citation type="journal article" date="2003" name="Science">
        <title>Role of mobile DNA in the evolution of vancomycin-resistant Enterococcus faecalis.</title>
        <authorList>
            <person name="Paulsen I.T."/>
            <person name="Banerjei L."/>
            <person name="Myers G.S.A."/>
            <person name="Nelson K.E."/>
            <person name="Seshadri R."/>
            <person name="Read T.D."/>
            <person name="Fouts D.E."/>
            <person name="Eisen J.A."/>
            <person name="Gill S.R."/>
            <person name="Heidelberg J.F."/>
            <person name="Tettelin H."/>
            <person name="Dodson R.J."/>
            <person name="Umayam L.A."/>
            <person name="Brinkac L.M."/>
            <person name="Beanan M.J."/>
            <person name="Daugherty S.C."/>
            <person name="DeBoy R.T."/>
            <person name="Durkin S.A."/>
            <person name="Kolonay J.F."/>
            <person name="Madupu R."/>
            <person name="Nelson W.C."/>
            <person name="Vamathevan J.J."/>
            <person name="Tran B."/>
            <person name="Upton J."/>
            <person name="Hansen T."/>
            <person name="Shetty J."/>
            <person name="Khouri H.M."/>
            <person name="Utterback T.R."/>
            <person name="Radune D."/>
            <person name="Ketchum K.A."/>
            <person name="Dougherty B.A."/>
            <person name="Fraser C.M."/>
        </authorList>
    </citation>
    <scope>NUCLEOTIDE SEQUENCE [LARGE SCALE GENOMIC DNA]</scope>
    <source>
        <strain>ATCC 700802 / V583</strain>
    </source>
</reference>
<sequence length="103" mass="12544">MIKKAFCMQVYPDQHAEYQRRHEKLWPEMRQMLKEHGAIKYQIFLNPETSTLFGYLEIEDEARWEQIALTPINQKWWNYMEDIMETNPDCSPMTAELKKVFEL</sequence>
<protein>
    <recommendedName>
        <fullName evidence="1">L-rhamnose mutarotase</fullName>
        <ecNumber evidence="1">5.1.3.32</ecNumber>
    </recommendedName>
    <alternativeName>
        <fullName evidence="1">Rhamnose 1-epimerase</fullName>
    </alternativeName>
    <alternativeName>
        <fullName evidence="1">Type-3 mutarotase</fullName>
    </alternativeName>
</protein>